<reference key="1">
    <citation type="journal article" date="1995" name="Science">
        <title>Whole-genome random sequencing and assembly of Haemophilus influenzae Rd.</title>
        <authorList>
            <person name="Fleischmann R.D."/>
            <person name="Adams M.D."/>
            <person name="White O."/>
            <person name="Clayton R.A."/>
            <person name="Kirkness E.F."/>
            <person name="Kerlavage A.R."/>
            <person name="Bult C.J."/>
            <person name="Tomb J.-F."/>
            <person name="Dougherty B.A."/>
            <person name="Merrick J.M."/>
            <person name="McKenney K."/>
            <person name="Sutton G.G."/>
            <person name="FitzHugh W."/>
            <person name="Fields C.A."/>
            <person name="Gocayne J.D."/>
            <person name="Scott J.D."/>
            <person name="Shirley R."/>
            <person name="Liu L.-I."/>
            <person name="Glodek A."/>
            <person name="Kelley J.M."/>
            <person name="Weidman J.F."/>
            <person name="Phillips C.A."/>
            <person name="Spriggs T."/>
            <person name="Hedblom E."/>
            <person name="Cotton M.D."/>
            <person name="Utterback T.R."/>
            <person name="Hanna M.C."/>
            <person name="Nguyen D.T."/>
            <person name="Saudek D.M."/>
            <person name="Brandon R.C."/>
            <person name="Fine L.D."/>
            <person name="Fritchman J.L."/>
            <person name="Fuhrmann J.L."/>
            <person name="Geoghagen N.S.M."/>
            <person name="Gnehm C.L."/>
            <person name="McDonald L.A."/>
            <person name="Small K.V."/>
            <person name="Fraser C.M."/>
            <person name="Smith H.O."/>
            <person name="Venter J.C."/>
        </authorList>
    </citation>
    <scope>NUCLEOTIDE SEQUENCE [LARGE SCALE GENOMIC DNA]</scope>
    <source>
        <strain>ATCC 51907 / DSM 11121 / KW20 / Rd</strain>
    </source>
</reference>
<proteinExistence type="inferred from homology"/>
<comment type="function">
    <text evidence="1">Catalyzes the conversion of D-ribulose 5-phosphate to formate and 3,4-dihydroxy-2-butanone 4-phosphate.</text>
</comment>
<comment type="catalytic activity">
    <reaction evidence="1">
        <text>D-ribulose 5-phosphate = (2S)-2-hydroxy-3-oxobutyl phosphate + formate + H(+)</text>
        <dbReference type="Rhea" id="RHEA:18457"/>
        <dbReference type="ChEBI" id="CHEBI:15378"/>
        <dbReference type="ChEBI" id="CHEBI:15740"/>
        <dbReference type="ChEBI" id="CHEBI:58121"/>
        <dbReference type="ChEBI" id="CHEBI:58830"/>
        <dbReference type="EC" id="4.1.99.12"/>
    </reaction>
</comment>
<comment type="cofactor">
    <cofactor evidence="1">
        <name>Mg(2+)</name>
        <dbReference type="ChEBI" id="CHEBI:18420"/>
    </cofactor>
    <cofactor evidence="1">
        <name>Mn(2+)</name>
        <dbReference type="ChEBI" id="CHEBI:29035"/>
    </cofactor>
    <text evidence="1">Binds 2 divalent metal cations per subunit. Magnesium or manganese.</text>
</comment>
<comment type="pathway">
    <text evidence="1">Cofactor biosynthesis; riboflavin biosynthesis; 2-hydroxy-3-oxobutyl phosphate from D-ribulose 5-phosphate: step 1/1.</text>
</comment>
<comment type="subunit">
    <text evidence="1">Homodimer.</text>
</comment>
<comment type="similarity">
    <text evidence="1">Belongs to the DHBP synthase family.</text>
</comment>
<accession>P44866</accession>
<feature type="chain" id="PRO_0000151800" description="3,4-dihydroxy-2-butanone 4-phosphate synthase">
    <location>
        <begin position="1"/>
        <end position="215"/>
    </location>
</feature>
<feature type="binding site" evidence="1">
    <location>
        <begin position="38"/>
        <end position="39"/>
    </location>
    <ligand>
        <name>D-ribulose 5-phosphate</name>
        <dbReference type="ChEBI" id="CHEBI:58121"/>
    </ligand>
</feature>
<feature type="binding site" evidence="1">
    <location>
        <position position="39"/>
    </location>
    <ligand>
        <name>Mg(2+)</name>
        <dbReference type="ChEBI" id="CHEBI:18420"/>
        <label>1</label>
    </ligand>
</feature>
<feature type="binding site" evidence="1">
    <location>
        <position position="39"/>
    </location>
    <ligand>
        <name>Mg(2+)</name>
        <dbReference type="ChEBI" id="CHEBI:18420"/>
        <label>2</label>
    </ligand>
</feature>
<feature type="binding site" evidence="1">
    <location>
        <position position="43"/>
    </location>
    <ligand>
        <name>D-ribulose 5-phosphate</name>
        <dbReference type="ChEBI" id="CHEBI:58121"/>
    </ligand>
</feature>
<feature type="binding site" evidence="1">
    <location>
        <begin position="151"/>
        <end position="155"/>
    </location>
    <ligand>
        <name>D-ribulose 5-phosphate</name>
        <dbReference type="ChEBI" id="CHEBI:58121"/>
    </ligand>
</feature>
<feature type="binding site" evidence="1">
    <location>
        <position position="154"/>
    </location>
    <ligand>
        <name>Mg(2+)</name>
        <dbReference type="ChEBI" id="CHEBI:18420"/>
        <label>2</label>
    </ligand>
</feature>
<feature type="binding site" evidence="1">
    <location>
        <position position="175"/>
    </location>
    <ligand>
        <name>D-ribulose 5-phosphate</name>
        <dbReference type="ChEBI" id="CHEBI:58121"/>
    </ligand>
</feature>
<feature type="site" description="Essential for catalytic activity" evidence="1">
    <location>
        <position position="137"/>
    </location>
</feature>
<feature type="site" description="Essential for catalytic activity" evidence="1">
    <location>
        <position position="175"/>
    </location>
</feature>
<gene>
    <name evidence="1" type="primary">ribB</name>
    <name type="ordered locus">HI_0764</name>
</gene>
<organism>
    <name type="scientific">Haemophilus influenzae (strain ATCC 51907 / DSM 11121 / KW20 / Rd)</name>
    <dbReference type="NCBI Taxonomy" id="71421"/>
    <lineage>
        <taxon>Bacteria</taxon>
        <taxon>Pseudomonadati</taxon>
        <taxon>Pseudomonadota</taxon>
        <taxon>Gammaproteobacteria</taxon>
        <taxon>Pasteurellales</taxon>
        <taxon>Pasteurellaceae</taxon>
        <taxon>Haemophilus</taxon>
    </lineage>
</organism>
<evidence type="ECO:0000255" key="1">
    <source>
        <dbReference type="HAMAP-Rule" id="MF_00180"/>
    </source>
</evidence>
<dbReference type="EC" id="4.1.99.12" evidence="1"/>
<dbReference type="EMBL" id="L42023">
    <property type="protein sequence ID" value="AAC22422.1"/>
    <property type="molecule type" value="Genomic_DNA"/>
</dbReference>
<dbReference type="PIR" id="E64091">
    <property type="entry name" value="E64091"/>
</dbReference>
<dbReference type="RefSeq" id="NP_438923.1">
    <property type="nucleotide sequence ID" value="NC_000907.1"/>
</dbReference>
<dbReference type="SMR" id="P44866"/>
<dbReference type="STRING" id="71421.HI_0764"/>
<dbReference type="EnsemblBacteria" id="AAC22422">
    <property type="protein sequence ID" value="AAC22422"/>
    <property type="gene ID" value="HI_0764"/>
</dbReference>
<dbReference type="KEGG" id="hin:HI_0764"/>
<dbReference type="PATRIC" id="fig|71421.8.peg.803"/>
<dbReference type="eggNOG" id="COG0108">
    <property type="taxonomic scope" value="Bacteria"/>
</dbReference>
<dbReference type="HOGENOM" id="CLU_020273_3_0_6"/>
<dbReference type="OrthoDB" id="9793111at2"/>
<dbReference type="PhylomeDB" id="P44866"/>
<dbReference type="BioCyc" id="HINF71421:G1GJ1-804-MONOMER"/>
<dbReference type="UniPathway" id="UPA00275">
    <property type="reaction ID" value="UER00399"/>
</dbReference>
<dbReference type="Proteomes" id="UP000000579">
    <property type="component" value="Chromosome"/>
</dbReference>
<dbReference type="GO" id="GO:0005829">
    <property type="term" value="C:cytosol"/>
    <property type="evidence" value="ECO:0000318"/>
    <property type="project" value="GO_Central"/>
</dbReference>
<dbReference type="GO" id="GO:0008686">
    <property type="term" value="F:3,4-dihydroxy-2-butanone-4-phosphate synthase activity"/>
    <property type="evidence" value="ECO:0000318"/>
    <property type="project" value="GO_Central"/>
</dbReference>
<dbReference type="GO" id="GO:0000287">
    <property type="term" value="F:magnesium ion binding"/>
    <property type="evidence" value="ECO:0007669"/>
    <property type="project" value="UniProtKB-UniRule"/>
</dbReference>
<dbReference type="GO" id="GO:0030145">
    <property type="term" value="F:manganese ion binding"/>
    <property type="evidence" value="ECO:0007669"/>
    <property type="project" value="UniProtKB-UniRule"/>
</dbReference>
<dbReference type="GO" id="GO:0009231">
    <property type="term" value="P:riboflavin biosynthetic process"/>
    <property type="evidence" value="ECO:0000318"/>
    <property type="project" value="GO_Central"/>
</dbReference>
<dbReference type="FunFam" id="3.90.870.10:FF:000002">
    <property type="entry name" value="3,4-dihydroxy-2-butanone 4-phosphate synthase"/>
    <property type="match status" value="1"/>
</dbReference>
<dbReference type="Gene3D" id="3.90.870.10">
    <property type="entry name" value="DHBP synthase"/>
    <property type="match status" value="1"/>
</dbReference>
<dbReference type="HAMAP" id="MF_00180">
    <property type="entry name" value="RibB"/>
    <property type="match status" value="1"/>
</dbReference>
<dbReference type="InterPro" id="IPR017945">
    <property type="entry name" value="DHBP_synth_RibB-like_a/b_dom"/>
</dbReference>
<dbReference type="InterPro" id="IPR000422">
    <property type="entry name" value="DHBP_synthase_RibB"/>
</dbReference>
<dbReference type="NCBIfam" id="TIGR00506">
    <property type="entry name" value="ribB"/>
    <property type="match status" value="1"/>
</dbReference>
<dbReference type="PANTHER" id="PTHR21327:SF38">
    <property type="entry name" value="3,4-DIHYDROXY-2-BUTANONE 4-PHOSPHATE SYNTHASE"/>
    <property type="match status" value="1"/>
</dbReference>
<dbReference type="PANTHER" id="PTHR21327">
    <property type="entry name" value="GTP CYCLOHYDROLASE II-RELATED"/>
    <property type="match status" value="1"/>
</dbReference>
<dbReference type="Pfam" id="PF00926">
    <property type="entry name" value="DHBP_synthase"/>
    <property type="match status" value="1"/>
</dbReference>
<dbReference type="SUPFAM" id="SSF55821">
    <property type="entry name" value="YrdC/RibB"/>
    <property type="match status" value="1"/>
</dbReference>
<name>RIBB_HAEIN</name>
<sequence length="215" mass="23254">MNQSILSPFGNTAEERVLNAINAFKNGTGVLVLDDEDRENEGDLIFPAETITPEQMAKLIRYGSGIVCLCITDERCQQLDLPPMVEHNNSVNKTAFTVTIEAAKGVSTGVSAADRVTTIQTAIADNAVLTDLHRPGHVFPLRAANGGVLTRRGHTEASVDLARLAGFKEAGVICEITNDDGTMARAPEIVEFAKKFGYSVLTIEDLVEYRLAHNI</sequence>
<protein>
    <recommendedName>
        <fullName evidence="1">3,4-dihydroxy-2-butanone 4-phosphate synthase</fullName>
        <shortName evidence="1">DHBP synthase</shortName>
        <ecNumber evidence="1">4.1.99.12</ecNumber>
    </recommendedName>
</protein>
<keyword id="KW-0456">Lyase</keyword>
<keyword id="KW-0460">Magnesium</keyword>
<keyword id="KW-0464">Manganese</keyword>
<keyword id="KW-0479">Metal-binding</keyword>
<keyword id="KW-1185">Reference proteome</keyword>
<keyword id="KW-0686">Riboflavin biosynthesis</keyword>